<feature type="chain" id="PRO_1000184105" description="Large ribosomal subunit protein uL23">
    <location>
        <begin position="1"/>
        <end position="98"/>
    </location>
</feature>
<accession>C0M6X1</accession>
<reference key="1">
    <citation type="journal article" date="2009" name="PLoS Pathog.">
        <title>Genomic evidence for the evolution of Streptococcus equi: host restriction, increased virulence, and genetic exchange with human pathogens.</title>
        <authorList>
            <person name="Holden M.T.G."/>
            <person name="Heather Z."/>
            <person name="Paillot R."/>
            <person name="Steward K.F."/>
            <person name="Webb K."/>
            <person name="Ainslie F."/>
            <person name="Jourdan T."/>
            <person name="Bason N.C."/>
            <person name="Holroyd N.E."/>
            <person name="Mungall K."/>
            <person name="Quail M.A."/>
            <person name="Sanders M."/>
            <person name="Simmonds M."/>
            <person name="Willey D."/>
            <person name="Brooks K."/>
            <person name="Aanensen D.M."/>
            <person name="Spratt B.G."/>
            <person name="Jolley K.A."/>
            <person name="Maiden M.C.J."/>
            <person name="Kehoe M."/>
            <person name="Chanter N."/>
            <person name="Bentley S.D."/>
            <person name="Robinson C."/>
            <person name="Maskell D.J."/>
            <person name="Parkhill J."/>
            <person name="Waller A.S."/>
        </authorList>
    </citation>
    <scope>NUCLEOTIDE SEQUENCE [LARGE SCALE GENOMIC DNA]</scope>
    <source>
        <strain>4047</strain>
    </source>
</reference>
<comment type="function">
    <text evidence="1">One of the early assembly proteins it binds 23S rRNA. One of the proteins that surrounds the polypeptide exit tunnel on the outside of the ribosome. Forms the main docking site for trigger factor binding to the ribosome.</text>
</comment>
<comment type="subunit">
    <text evidence="1">Part of the 50S ribosomal subunit. Contacts protein L29, and trigger factor when it is bound to the ribosome.</text>
</comment>
<comment type="similarity">
    <text evidence="1">Belongs to the universal ribosomal protein uL23 family.</text>
</comment>
<proteinExistence type="inferred from homology"/>
<gene>
    <name evidence="1" type="primary">rplW</name>
    <name type="ordered locus">SEQ_0057</name>
</gene>
<keyword id="KW-0687">Ribonucleoprotein</keyword>
<keyword id="KW-0689">Ribosomal protein</keyword>
<keyword id="KW-0694">RNA-binding</keyword>
<keyword id="KW-0699">rRNA-binding</keyword>
<dbReference type="EMBL" id="FM204883">
    <property type="protein sequence ID" value="CAW91971.1"/>
    <property type="molecule type" value="Genomic_DNA"/>
</dbReference>
<dbReference type="RefSeq" id="WP_012678793.1">
    <property type="nucleotide sequence ID" value="NC_012471.1"/>
</dbReference>
<dbReference type="SMR" id="C0M6X1"/>
<dbReference type="KEGG" id="seu:SEQ_0057"/>
<dbReference type="HOGENOM" id="CLU_037562_3_2_9"/>
<dbReference type="OrthoDB" id="9793353at2"/>
<dbReference type="Proteomes" id="UP000001365">
    <property type="component" value="Chromosome"/>
</dbReference>
<dbReference type="GO" id="GO:1990904">
    <property type="term" value="C:ribonucleoprotein complex"/>
    <property type="evidence" value="ECO:0007669"/>
    <property type="project" value="UniProtKB-KW"/>
</dbReference>
<dbReference type="GO" id="GO:0005840">
    <property type="term" value="C:ribosome"/>
    <property type="evidence" value="ECO:0007669"/>
    <property type="project" value="UniProtKB-KW"/>
</dbReference>
<dbReference type="GO" id="GO:0019843">
    <property type="term" value="F:rRNA binding"/>
    <property type="evidence" value="ECO:0007669"/>
    <property type="project" value="UniProtKB-UniRule"/>
</dbReference>
<dbReference type="GO" id="GO:0003735">
    <property type="term" value="F:structural constituent of ribosome"/>
    <property type="evidence" value="ECO:0007669"/>
    <property type="project" value="InterPro"/>
</dbReference>
<dbReference type="GO" id="GO:0006412">
    <property type="term" value="P:translation"/>
    <property type="evidence" value="ECO:0007669"/>
    <property type="project" value="UniProtKB-UniRule"/>
</dbReference>
<dbReference type="FunFam" id="3.30.70.330:FF:000001">
    <property type="entry name" value="50S ribosomal protein L23"/>
    <property type="match status" value="1"/>
</dbReference>
<dbReference type="Gene3D" id="3.30.70.330">
    <property type="match status" value="1"/>
</dbReference>
<dbReference type="HAMAP" id="MF_01369_B">
    <property type="entry name" value="Ribosomal_uL23_B"/>
    <property type="match status" value="1"/>
</dbReference>
<dbReference type="InterPro" id="IPR012677">
    <property type="entry name" value="Nucleotide-bd_a/b_plait_sf"/>
</dbReference>
<dbReference type="InterPro" id="IPR013025">
    <property type="entry name" value="Ribosomal_uL23-like"/>
</dbReference>
<dbReference type="InterPro" id="IPR012678">
    <property type="entry name" value="Ribosomal_uL23/eL15/eS24_sf"/>
</dbReference>
<dbReference type="InterPro" id="IPR001014">
    <property type="entry name" value="Ribosomal_uL23_CS"/>
</dbReference>
<dbReference type="NCBIfam" id="NF004361">
    <property type="entry name" value="PRK05738.2-1"/>
    <property type="match status" value="1"/>
</dbReference>
<dbReference type="NCBIfam" id="NF004363">
    <property type="entry name" value="PRK05738.2-4"/>
    <property type="match status" value="1"/>
</dbReference>
<dbReference type="PANTHER" id="PTHR11620">
    <property type="entry name" value="60S RIBOSOMAL PROTEIN L23A"/>
    <property type="match status" value="1"/>
</dbReference>
<dbReference type="Pfam" id="PF00276">
    <property type="entry name" value="Ribosomal_L23"/>
    <property type="match status" value="1"/>
</dbReference>
<dbReference type="SUPFAM" id="SSF54189">
    <property type="entry name" value="Ribosomal proteins S24e, L23 and L15e"/>
    <property type="match status" value="1"/>
</dbReference>
<dbReference type="PROSITE" id="PS00050">
    <property type="entry name" value="RIBOSOMAL_L23"/>
    <property type="match status" value="1"/>
</dbReference>
<sequence>MNLYDVIKKPVITEKSMYALEEGKYTFEVDTRAHKLLIKQAVEAAFDGVKVASVNTVNVKPKAKRVGRYTGFTSKTKKAIITLTADSKAIELFAVEAE</sequence>
<evidence type="ECO:0000255" key="1">
    <source>
        <dbReference type="HAMAP-Rule" id="MF_01369"/>
    </source>
</evidence>
<evidence type="ECO:0000305" key="2"/>
<name>RL23_STRE4</name>
<protein>
    <recommendedName>
        <fullName evidence="1">Large ribosomal subunit protein uL23</fullName>
    </recommendedName>
    <alternativeName>
        <fullName evidence="2">50S ribosomal protein L23</fullName>
    </alternativeName>
</protein>
<organism>
    <name type="scientific">Streptococcus equi subsp. equi (strain 4047)</name>
    <dbReference type="NCBI Taxonomy" id="553482"/>
    <lineage>
        <taxon>Bacteria</taxon>
        <taxon>Bacillati</taxon>
        <taxon>Bacillota</taxon>
        <taxon>Bacilli</taxon>
        <taxon>Lactobacillales</taxon>
        <taxon>Streptococcaceae</taxon>
        <taxon>Streptococcus</taxon>
    </lineage>
</organism>